<protein>
    <recommendedName>
        <fullName>Cytochrome c oxidase subunit 2</fullName>
        <ecNumber>7.1.1.9</ecNumber>
    </recommendedName>
    <alternativeName>
        <fullName>Cytochrome c oxidase polypeptide II</fullName>
    </alternativeName>
</protein>
<proteinExistence type="evidence at protein level"/>
<gene>
    <name type="primary">MT-CO2</name>
    <name type="synonym">COII</name>
    <name type="synonym">COX2</name>
    <name type="synonym">COXII</name>
    <name type="synonym">MTCO2</name>
</gene>
<keyword id="KW-0002">3D-structure</keyword>
<keyword id="KW-0186">Copper</keyword>
<keyword id="KW-0903">Direct protein sequencing</keyword>
<keyword id="KW-0249">Electron transport</keyword>
<keyword id="KW-0291">Formylation</keyword>
<keyword id="KW-0460">Magnesium</keyword>
<keyword id="KW-0472">Membrane</keyword>
<keyword id="KW-0479">Metal-binding</keyword>
<keyword id="KW-0496">Mitochondrion</keyword>
<keyword id="KW-0999">Mitochondrion inner membrane</keyword>
<keyword id="KW-0597">Phosphoprotein</keyword>
<keyword id="KW-1185">Reference proteome</keyword>
<keyword id="KW-0679">Respiratory chain</keyword>
<keyword id="KW-1278">Translocase</keyword>
<keyword id="KW-0812">Transmembrane</keyword>
<keyword id="KW-1133">Transmembrane helix</keyword>
<keyword id="KW-0813">Transport</keyword>
<name>COX2_BOVIN</name>
<organism>
    <name type="scientific">Bos taurus</name>
    <name type="common">Bovine</name>
    <dbReference type="NCBI Taxonomy" id="9913"/>
    <lineage>
        <taxon>Eukaryota</taxon>
        <taxon>Metazoa</taxon>
        <taxon>Chordata</taxon>
        <taxon>Craniata</taxon>
        <taxon>Vertebrata</taxon>
        <taxon>Euteleostomi</taxon>
        <taxon>Mammalia</taxon>
        <taxon>Eutheria</taxon>
        <taxon>Laurasiatheria</taxon>
        <taxon>Artiodactyla</taxon>
        <taxon>Ruminantia</taxon>
        <taxon>Pecora</taxon>
        <taxon>Bovidae</taxon>
        <taxon>Bovinae</taxon>
        <taxon>Bos</taxon>
    </lineage>
</organism>
<evidence type="ECO:0000250" key="1">
    <source>
        <dbReference type="UniProtKB" id="P00403"/>
    </source>
</evidence>
<evidence type="ECO:0000250" key="2">
    <source>
        <dbReference type="UniProtKB" id="P00406"/>
    </source>
</evidence>
<evidence type="ECO:0000250" key="3">
    <source>
        <dbReference type="UniProtKB" id="P00410"/>
    </source>
</evidence>
<evidence type="ECO:0000269" key="4">
    <source>
    </source>
</evidence>
<evidence type="ECO:0000269" key="5">
    <source>
    </source>
</evidence>
<evidence type="ECO:0000269" key="6">
    <source>
    </source>
</evidence>
<evidence type="ECO:0000269" key="7">
    <source>
    </source>
</evidence>
<evidence type="ECO:0000269" key="8">
    <source>
    </source>
</evidence>
<evidence type="ECO:0000269" key="9">
    <source>
    </source>
</evidence>
<evidence type="ECO:0000269" key="10">
    <source>
    </source>
</evidence>
<evidence type="ECO:0000305" key="11"/>
<evidence type="ECO:0000312" key="12">
    <source>
        <dbReference type="Proteomes" id="UP000009136"/>
    </source>
</evidence>
<evidence type="ECO:0007829" key="13">
    <source>
        <dbReference type="PDB" id="7COH"/>
    </source>
</evidence>
<dbReference type="EC" id="7.1.1.9"/>
<dbReference type="EMBL" id="V00654">
    <property type="protein sequence ID" value="CAA24000.1"/>
    <property type="molecule type" value="Genomic_DNA"/>
</dbReference>
<dbReference type="EMBL" id="M10544">
    <property type="protein sequence ID" value="AAA31644.1"/>
    <property type="molecule type" value="Genomic_DNA"/>
</dbReference>
<dbReference type="EMBL" id="AF490528">
    <property type="protein sequence ID" value="AAM08331.1"/>
    <property type="molecule type" value="Genomic_DNA"/>
</dbReference>
<dbReference type="EMBL" id="AF490529">
    <property type="protein sequence ID" value="AAM08344.1"/>
    <property type="molecule type" value="Genomic_DNA"/>
</dbReference>
<dbReference type="EMBL" id="AF493541">
    <property type="protein sequence ID" value="AAM12792.1"/>
    <property type="molecule type" value="Genomic_DNA"/>
</dbReference>
<dbReference type="EMBL" id="AF493542">
    <property type="protein sequence ID" value="AAM12805.1"/>
    <property type="molecule type" value="Genomic_DNA"/>
</dbReference>
<dbReference type="PIR" id="B00152">
    <property type="entry name" value="OBBO2"/>
</dbReference>
<dbReference type="RefSeq" id="YP_209208.1">
    <property type="nucleotide sequence ID" value="NC_006853.1"/>
</dbReference>
<dbReference type="PDB" id="1OCC">
    <property type="method" value="X-ray"/>
    <property type="resolution" value="2.80 A"/>
    <property type="chains" value="B/O=1-227"/>
</dbReference>
<dbReference type="PDB" id="1OCO">
    <property type="method" value="X-ray"/>
    <property type="resolution" value="2.80 A"/>
    <property type="chains" value="B/O=1-227"/>
</dbReference>
<dbReference type="PDB" id="1OCR">
    <property type="method" value="X-ray"/>
    <property type="resolution" value="2.35 A"/>
    <property type="chains" value="B/O=1-227"/>
</dbReference>
<dbReference type="PDB" id="1OCZ">
    <property type="method" value="X-ray"/>
    <property type="resolution" value="2.90 A"/>
    <property type="chains" value="B/O=1-227"/>
</dbReference>
<dbReference type="PDB" id="1V54">
    <property type="method" value="X-ray"/>
    <property type="resolution" value="1.80 A"/>
    <property type="chains" value="B/O=1-227"/>
</dbReference>
<dbReference type="PDB" id="1V55">
    <property type="method" value="X-ray"/>
    <property type="resolution" value="1.90 A"/>
    <property type="chains" value="B/O=1-227"/>
</dbReference>
<dbReference type="PDB" id="2DYR">
    <property type="method" value="X-ray"/>
    <property type="resolution" value="1.80 A"/>
    <property type="chains" value="B/O=1-227"/>
</dbReference>
<dbReference type="PDB" id="2DYS">
    <property type="method" value="X-ray"/>
    <property type="resolution" value="2.20 A"/>
    <property type="chains" value="B/O=1-227"/>
</dbReference>
<dbReference type="PDB" id="2EIJ">
    <property type="method" value="X-ray"/>
    <property type="resolution" value="1.90 A"/>
    <property type="chains" value="B/O=1-227"/>
</dbReference>
<dbReference type="PDB" id="2EIK">
    <property type="method" value="X-ray"/>
    <property type="resolution" value="2.10 A"/>
    <property type="chains" value="B/O=1-227"/>
</dbReference>
<dbReference type="PDB" id="2EIL">
    <property type="method" value="X-ray"/>
    <property type="resolution" value="2.10 A"/>
    <property type="chains" value="B/O=1-227"/>
</dbReference>
<dbReference type="PDB" id="2EIM">
    <property type="method" value="X-ray"/>
    <property type="resolution" value="2.60 A"/>
    <property type="chains" value="B/O=1-227"/>
</dbReference>
<dbReference type="PDB" id="2EIN">
    <property type="method" value="X-ray"/>
    <property type="resolution" value="2.70 A"/>
    <property type="chains" value="B/O=1-227"/>
</dbReference>
<dbReference type="PDB" id="2OCC">
    <property type="method" value="X-ray"/>
    <property type="resolution" value="2.30 A"/>
    <property type="chains" value="B/O=1-227"/>
</dbReference>
<dbReference type="PDB" id="2Y69">
    <property type="method" value="X-ray"/>
    <property type="resolution" value="1.95 A"/>
    <property type="chains" value="B/O=1-227"/>
</dbReference>
<dbReference type="PDB" id="2YBB">
    <property type="method" value="EM"/>
    <property type="resolution" value="19.00 A"/>
    <property type="chains" value="M=1-227"/>
</dbReference>
<dbReference type="PDB" id="2ZXW">
    <property type="method" value="X-ray"/>
    <property type="resolution" value="2.50 A"/>
    <property type="chains" value="B/O=1-227"/>
</dbReference>
<dbReference type="PDB" id="3ABK">
    <property type="method" value="X-ray"/>
    <property type="resolution" value="2.00 A"/>
    <property type="chains" value="B/O=1-227"/>
</dbReference>
<dbReference type="PDB" id="3ABL">
    <property type="method" value="X-ray"/>
    <property type="resolution" value="2.10 A"/>
    <property type="chains" value="B/O=1-227"/>
</dbReference>
<dbReference type="PDB" id="3ABM">
    <property type="method" value="X-ray"/>
    <property type="resolution" value="1.95 A"/>
    <property type="chains" value="B/O=1-227"/>
</dbReference>
<dbReference type="PDB" id="3AG1">
    <property type="method" value="X-ray"/>
    <property type="resolution" value="2.20 A"/>
    <property type="chains" value="B/O=1-227"/>
</dbReference>
<dbReference type="PDB" id="3AG2">
    <property type="method" value="X-ray"/>
    <property type="resolution" value="1.80 A"/>
    <property type="chains" value="B/O=1-227"/>
</dbReference>
<dbReference type="PDB" id="3AG3">
    <property type="method" value="X-ray"/>
    <property type="resolution" value="1.80 A"/>
    <property type="chains" value="B/O=1-227"/>
</dbReference>
<dbReference type="PDB" id="3AG4">
    <property type="method" value="X-ray"/>
    <property type="resolution" value="2.05 A"/>
    <property type="chains" value="B/O=1-227"/>
</dbReference>
<dbReference type="PDB" id="3ASN">
    <property type="method" value="X-ray"/>
    <property type="resolution" value="3.00 A"/>
    <property type="chains" value="B/O=1-227"/>
</dbReference>
<dbReference type="PDB" id="3ASO">
    <property type="method" value="X-ray"/>
    <property type="resolution" value="2.30 A"/>
    <property type="chains" value="B/O=1-227"/>
</dbReference>
<dbReference type="PDB" id="3WG7">
    <property type="method" value="X-ray"/>
    <property type="resolution" value="1.90 A"/>
    <property type="chains" value="B/O=1-227"/>
</dbReference>
<dbReference type="PDB" id="3X2Q">
    <property type="method" value="X-ray"/>
    <property type="resolution" value="2.00 A"/>
    <property type="chains" value="B/O=1-227"/>
</dbReference>
<dbReference type="PDB" id="5B1A">
    <property type="method" value="X-ray"/>
    <property type="resolution" value="1.50 A"/>
    <property type="chains" value="B/O=1-227"/>
</dbReference>
<dbReference type="PDB" id="5B1B">
    <property type="method" value="X-ray"/>
    <property type="resolution" value="1.60 A"/>
    <property type="chains" value="B/O=1-227"/>
</dbReference>
<dbReference type="PDB" id="5B3S">
    <property type="method" value="X-ray"/>
    <property type="resolution" value="1.68 A"/>
    <property type="chains" value="B/O=2-227"/>
</dbReference>
<dbReference type="PDB" id="5GPN">
    <property type="method" value="EM"/>
    <property type="resolution" value="5.40 A"/>
    <property type="chains" value="z=1-227"/>
</dbReference>
<dbReference type="PDB" id="5IY5">
    <property type="method" value="X-ray"/>
    <property type="resolution" value="2.00 A"/>
    <property type="chains" value="B/O=1-227"/>
</dbReference>
<dbReference type="PDB" id="5LUF">
    <property type="method" value="EM"/>
    <property type="resolution" value="9.10 A"/>
    <property type="chains" value="y=1-227"/>
</dbReference>
<dbReference type="PDB" id="5W97">
    <property type="method" value="X-ray"/>
    <property type="resolution" value="2.30 A"/>
    <property type="chains" value="B/b=1-227"/>
</dbReference>
<dbReference type="PDB" id="5WAU">
    <property type="method" value="X-ray"/>
    <property type="resolution" value="1.95 A"/>
    <property type="chains" value="B/b=1-227"/>
</dbReference>
<dbReference type="PDB" id="5X19">
    <property type="method" value="X-ray"/>
    <property type="resolution" value="2.20 A"/>
    <property type="chains" value="B/O=1-227"/>
</dbReference>
<dbReference type="PDB" id="5X1B">
    <property type="method" value="X-ray"/>
    <property type="resolution" value="2.40 A"/>
    <property type="chains" value="B/O=1-227"/>
</dbReference>
<dbReference type="PDB" id="5X1F">
    <property type="method" value="X-ray"/>
    <property type="resolution" value="2.20 A"/>
    <property type="chains" value="B/O=1-227"/>
</dbReference>
<dbReference type="PDB" id="5XDQ">
    <property type="method" value="X-ray"/>
    <property type="resolution" value="1.77 A"/>
    <property type="chains" value="B/O=1-227"/>
</dbReference>
<dbReference type="PDB" id="5XDX">
    <property type="method" value="X-ray"/>
    <property type="resolution" value="1.99 A"/>
    <property type="chains" value="B/O=1-227"/>
</dbReference>
<dbReference type="PDB" id="5XTH">
    <property type="method" value="EM"/>
    <property type="resolution" value="3.90 A"/>
    <property type="chains" value="y=1-227"/>
</dbReference>
<dbReference type="PDB" id="5XTI">
    <property type="method" value="EM"/>
    <property type="resolution" value="17.40 A"/>
    <property type="chains" value="By/y=1-227"/>
</dbReference>
<dbReference type="PDB" id="5Z84">
    <property type="method" value="X-ray"/>
    <property type="resolution" value="1.85 A"/>
    <property type="chains" value="B/O=1-227"/>
</dbReference>
<dbReference type="PDB" id="5Z85">
    <property type="method" value="X-ray"/>
    <property type="resolution" value="1.85 A"/>
    <property type="chains" value="B/O=1-227"/>
</dbReference>
<dbReference type="PDB" id="5Z86">
    <property type="method" value="X-ray"/>
    <property type="resolution" value="1.85 A"/>
    <property type="chains" value="B/O=1-227"/>
</dbReference>
<dbReference type="PDB" id="5ZCO">
    <property type="method" value="X-ray"/>
    <property type="resolution" value="1.90 A"/>
    <property type="chains" value="B/O=1-227"/>
</dbReference>
<dbReference type="PDB" id="5ZCP">
    <property type="method" value="X-ray"/>
    <property type="resolution" value="1.65 A"/>
    <property type="chains" value="B/O=1-227"/>
</dbReference>
<dbReference type="PDB" id="5ZCQ">
    <property type="method" value="X-ray"/>
    <property type="resolution" value="1.65 A"/>
    <property type="chains" value="B/O=1-227"/>
</dbReference>
<dbReference type="PDB" id="6J8M">
    <property type="method" value="X-ray"/>
    <property type="resolution" value="1.90 A"/>
    <property type="chains" value="B/O=1-227"/>
</dbReference>
<dbReference type="PDB" id="6JUW">
    <property type="method" value="X-ray"/>
    <property type="resolution" value="1.80 A"/>
    <property type="chains" value="B/O=1-227"/>
</dbReference>
<dbReference type="PDB" id="6JY3">
    <property type="method" value="X-ray"/>
    <property type="resolution" value="1.85 A"/>
    <property type="chains" value="B=1-227"/>
</dbReference>
<dbReference type="PDB" id="6JY4">
    <property type="method" value="X-ray"/>
    <property type="resolution" value="1.95 A"/>
    <property type="chains" value="B=1-227"/>
</dbReference>
<dbReference type="PDB" id="6NKN">
    <property type="method" value="X-ray"/>
    <property type="resolution" value="2.50 A"/>
    <property type="chains" value="B/O=1-227"/>
</dbReference>
<dbReference type="PDB" id="6NMF">
    <property type="method" value="X-ray"/>
    <property type="resolution" value="2.80 A"/>
    <property type="chains" value="B/O=1-227"/>
</dbReference>
<dbReference type="PDB" id="6NMP">
    <property type="method" value="X-ray"/>
    <property type="resolution" value="2.90 A"/>
    <property type="chains" value="B/O=1-227"/>
</dbReference>
<dbReference type="PDB" id="7COH">
    <property type="method" value="X-ray"/>
    <property type="resolution" value="1.30 A"/>
    <property type="chains" value="B/O=1-227"/>
</dbReference>
<dbReference type="PDB" id="7CP5">
    <property type="method" value="X-ray"/>
    <property type="resolution" value="1.76 A"/>
    <property type="chains" value="B/O=1-227"/>
</dbReference>
<dbReference type="PDB" id="7D5W">
    <property type="method" value="X-ray"/>
    <property type="resolution" value="1.84 A"/>
    <property type="chains" value="B/O=1-227"/>
</dbReference>
<dbReference type="PDB" id="7D5X">
    <property type="method" value="X-ray"/>
    <property type="resolution" value="1.74 A"/>
    <property type="chains" value="B/O=1-227"/>
</dbReference>
<dbReference type="PDB" id="7DGQ">
    <property type="method" value="EM"/>
    <property type="resolution" value="5.00 A"/>
    <property type="chains" value="C1=1-227"/>
</dbReference>
<dbReference type="PDB" id="7DGR">
    <property type="method" value="EM"/>
    <property type="resolution" value="4.60 A"/>
    <property type="chains" value="C4=1-227"/>
</dbReference>
<dbReference type="PDB" id="7DGS">
    <property type="method" value="EM"/>
    <property type="resolution" value="7.80 A"/>
    <property type="chains" value="B9=1-227"/>
</dbReference>
<dbReference type="PDB" id="7DKF">
    <property type="method" value="EM"/>
    <property type="resolution" value="8.30 A"/>
    <property type="chains" value="B3=1-227"/>
</dbReference>
<dbReference type="PDB" id="7EV7">
    <property type="method" value="X-ray"/>
    <property type="resolution" value="1.70 A"/>
    <property type="chains" value="B/O=1-227"/>
</dbReference>
<dbReference type="PDB" id="7THU">
    <property type="method" value="X-ray"/>
    <property type="resolution" value="1.93 A"/>
    <property type="chains" value="BBB/OOO=1-227"/>
</dbReference>
<dbReference type="PDB" id="7TIE">
    <property type="method" value="X-ray"/>
    <property type="resolution" value="1.90 A"/>
    <property type="chains" value="BBB/OOO=1-227"/>
</dbReference>
<dbReference type="PDB" id="7TIH">
    <property type="method" value="X-ray"/>
    <property type="resolution" value="2.35 A"/>
    <property type="chains" value="BBB/OOO=1-227"/>
</dbReference>
<dbReference type="PDB" id="7TII">
    <property type="method" value="X-ray"/>
    <property type="resolution" value="2.45 A"/>
    <property type="chains" value="BBB/OOO=1-227"/>
</dbReference>
<dbReference type="PDB" id="7VUW">
    <property type="method" value="X-ray"/>
    <property type="resolution" value="1.60 A"/>
    <property type="chains" value="B/O=1-227"/>
</dbReference>
<dbReference type="PDB" id="7VVR">
    <property type="method" value="X-ray"/>
    <property type="resolution" value="1.65 A"/>
    <property type="chains" value="B/O=1-227"/>
</dbReference>
<dbReference type="PDB" id="7W3E">
    <property type="method" value="X-ray"/>
    <property type="resolution" value="1.45 A"/>
    <property type="chains" value="B/O=1-227"/>
</dbReference>
<dbReference type="PDB" id="7XMA">
    <property type="method" value="X-ray"/>
    <property type="resolution" value="2.20 A"/>
    <property type="chains" value="B/O=1-227"/>
</dbReference>
<dbReference type="PDB" id="7XMB">
    <property type="method" value="X-ray"/>
    <property type="resolution" value="2.20 A"/>
    <property type="chains" value="B/O=1-227"/>
</dbReference>
<dbReference type="PDB" id="7Y44">
    <property type="method" value="X-ray"/>
    <property type="resolution" value="1.90 A"/>
    <property type="chains" value="B/O=1-227"/>
</dbReference>
<dbReference type="PDB" id="7YPY">
    <property type="method" value="X-ray"/>
    <property type="resolution" value="1.50 A"/>
    <property type="chains" value="B/O=1-227"/>
</dbReference>
<dbReference type="PDB" id="8D4T">
    <property type="method" value="EM"/>
    <property type="resolution" value="3.10 A"/>
    <property type="chains" value="O=1-227"/>
</dbReference>
<dbReference type="PDB" id="8GBT">
    <property type="method" value="X-ray"/>
    <property type="resolution" value="2.80 A"/>
    <property type="chains" value="B/O=1-227"/>
</dbReference>
<dbReference type="PDB" id="8GCQ">
    <property type="method" value="X-ray"/>
    <property type="resolution" value="2.38 A"/>
    <property type="chains" value="B/O=1-227"/>
</dbReference>
<dbReference type="PDB" id="8GVM">
    <property type="method" value="X-ray"/>
    <property type="resolution" value="1.85 A"/>
    <property type="chains" value="B/O=1-227"/>
</dbReference>
<dbReference type="PDB" id="8H8R">
    <property type="method" value="X-ray"/>
    <property type="resolution" value="1.70 A"/>
    <property type="chains" value="B/O=1-227"/>
</dbReference>
<dbReference type="PDB" id="8H8S">
    <property type="method" value="X-ray"/>
    <property type="resolution" value="1.70 A"/>
    <property type="chains" value="B/O=1-227"/>
</dbReference>
<dbReference type="PDB" id="8IJN">
    <property type="method" value="X-ray"/>
    <property type="resolution" value="1.80 A"/>
    <property type="chains" value="B/O=1-227"/>
</dbReference>
<dbReference type="PDBsum" id="1OCC"/>
<dbReference type="PDBsum" id="1OCO"/>
<dbReference type="PDBsum" id="1OCR"/>
<dbReference type="PDBsum" id="1OCZ"/>
<dbReference type="PDBsum" id="1V54"/>
<dbReference type="PDBsum" id="1V55"/>
<dbReference type="PDBsum" id="2DYR"/>
<dbReference type="PDBsum" id="2DYS"/>
<dbReference type="PDBsum" id="2EIJ"/>
<dbReference type="PDBsum" id="2EIK"/>
<dbReference type="PDBsum" id="2EIL"/>
<dbReference type="PDBsum" id="2EIM"/>
<dbReference type="PDBsum" id="2EIN"/>
<dbReference type="PDBsum" id="2OCC"/>
<dbReference type="PDBsum" id="2Y69"/>
<dbReference type="PDBsum" id="2YBB"/>
<dbReference type="PDBsum" id="2ZXW"/>
<dbReference type="PDBsum" id="3ABK"/>
<dbReference type="PDBsum" id="3ABL"/>
<dbReference type="PDBsum" id="3ABM"/>
<dbReference type="PDBsum" id="3AG1"/>
<dbReference type="PDBsum" id="3AG2"/>
<dbReference type="PDBsum" id="3AG3"/>
<dbReference type="PDBsum" id="3AG4"/>
<dbReference type="PDBsum" id="3ASN"/>
<dbReference type="PDBsum" id="3ASO"/>
<dbReference type="PDBsum" id="3WG7"/>
<dbReference type="PDBsum" id="3X2Q"/>
<dbReference type="PDBsum" id="5B1A"/>
<dbReference type="PDBsum" id="5B1B"/>
<dbReference type="PDBsum" id="5B3S"/>
<dbReference type="PDBsum" id="5GPN"/>
<dbReference type="PDBsum" id="5IY5"/>
<dbReference type="PDBsum" id="5LUF"/>
<dbReference type="PDBsum" id="5W97"/>
<dbReference type="PDBsum" id="5WAU"/>
<dbReference type="PDBsum" id="5X19"/>
<dbReference type="PDBsum" id="5X1B"/>
<dbReference type="PDBsum" id="5X1F"/>
<dbReference type="PDBsum" id="5XDQ"/>
<dbReference type="PDBsum" id="5XDX"/>
<dbReference type="PDBsum" id="5XTH"/>
<dbReference type="PDBsum" id="5XTI"/>
<dbReference type="PDBsum" id="5Z84"/>
<dbReference type="PDBsum" id="5Z85"/>
<dbReference type="PDBsum" id="5Z86"/>
<dbReference type="PDBsum" id="5ZCO"/>
<dbReference type="PDBsum" id="5ZCP"/>
<dbReference type="PDBsum" id="5ZCQ"/>
<dbReference type="PDBsum" id="6J8M"/>
<dbReference type="PDBsum" id="6JUW"/>
<dbReference type="PDBsum" id="6JY3"/>
<dbReference type="PDBsum" id="6JY4"/>
<dbReference type="PDBsum" id="6NKN"/>
<dbReference type="PDBsum" id="6NMF"/>
<dbReference type="PDBsum" id="6NMP"/>
<dbReference type="PDBsum" id="7COH"/>
<dbReference type="PDBsum" id="7CP5"/>
<dbReference type="PDBsum" id="7D5W"/>
<dbReference type="PDBsum" id="7D5X"/>
<dbReference type="PDBsum" id="7DGQ"/>
<dbReference type="PDBsum" id="7DGR"/>
<dbReference type="PDBsum" id="7DGS"/>
<dbReference type="PDBsum" id="7DKF"/>
<dbReference type="PDBsum" id="7EV7"/>
<dbReference type="PDBsum" id="7THU"/>
<dbReference type="PDBsum" id="7TIE"/>
<dbReference type="PDBsum" id="7TIH"/>
<dbReference type="PDBsum" id="7TII"/>
<dbReference type="PDBsum" id="7VUW"/>
<dbReference type="PDBsum" id="7VVR"/>
<dbReference type="PDBsum" id="7W3E"/>
<dbReference type="PDBsum" id="7XMA"/>
<dbReference type="PDBsum" id="7XMB"/>
<dbReference type="PDBsum" id="7Y44"/>
<dbReference type="PDBsum" id="7YPY"/>
<dbReference type="PDBsum" id="8D4T"/>
<dbReference type="PDBsum" id="8GBT"/>
<dbReference type="PDBsum" id="8GCQ"/>
<dbReference type="PDBsum" id="8GVM"/>
<dbReference type="PDBsum" id="8H8R"/>
<dbReference type="PDBsum" id="8H8S"/>
<dbReference type="PDBsum" id="8IJN"/>
<dbReference type="EMDB" id="EMD-27196"/>
<dbReference type="EMDB" id="EMD-30673"/>
<dbReference type="EMDB" id="EMD-30674"/>
<dbReference type="EMDB" id="EMD-30675"/>
<dbReference type="EMDB" id="EMD-30706"/>
<dbReference type="EMDB" id="EMD-4107"/>
<dbReference type="EMDB" id="EMD-9534"/>
<dbReference type="SMR" id="P68530"/>
<dbReference type="CORUM" id="P68530"/>
<dbReference type="DIP" id="DIP-39024N"/>
<dbReference type="FunCoup" id="P68530">
    <property type="interactions" value="259"/>
</dbReference>
<dbReference type="IntAct" id="P68530">
    <property type="interactions" value="2"/>
</dbReference>
<dbReference type="STRING" id="9913.ENSBTAP00000053151"/>
<dbReference type="TCDB" id="3.D.4.7.1">
    <property type="family name" value="the proton-translocating cytochrome oxidase (cox) superfamily"/>
</dbReference>
<dbReference type="GlyGen" id="P68530">
    <property type="glycosylation" value="1 site, 1 O-linked glycan (1 site)"/>
</dbReference>
<dbReference type="iPTMnet" id="P68530"/>
<dbReference type="PaxDb" id="9913-ENSBTAP00000053151"/>
<dbReference type="PeptideAtlas" id="P68530"/>
<dbReference type="Ensembl" id="ENSBTAT00000060549.1">
    <property type="protein sequence ID" value="ENSBTAP00000053151.1"/>
    <property type="gene ID" value="ENSBTAG00000043556.1"/>
</dbReference>
<dbReference type="GeneID" id="3283880"/>
<dbReference type="KEGG" id="bta:3283880"/>
<dbReference type="CTD" id="4513"/>
<dbReference type="VEuPathDB" id="HostDB:ENSBTAG00000043556"/>
<dbReference type="VGNC" id="VGNC:55746">
    <property type="gene designation" value="MT-CO2"/>
</dbReference>
<dbReference type="eggNOG" id="KOG4767">
    <property type="taxonomic scope" value="Eukaryota"/>
</dbReference>
<dbReference type="GeneTree" id="ENSGT00390000017410"/>
<dbReference type="HOGENOM" id="CLU_036876_2_3_1"/>
<dbReference type="InParanoid" id="P68530"/>
<dbReference type="OMA" id="WSYEYTD"/>
<dbReference type="OrthoDB" id="539285at2759"/>
<dbReference type="TreeFam" id="TF344269"/>
<dbReference type="Reactome" id="R-BTA-5628897">
    <property type="pathway name" value="TP53 Regulates Metabolic Genes"/>
</dbReference>
<dbReference type="Reactome" id="R-BTA-611105">
    <property type="pathway name" value="Respiratory electron transport"/>
</dbReference>
<dbReference type="Reactome" id="R-BTA-9707564">
    <property type="pathway name" value="Cytoprotection by HMOX1"/>
</dbReference>
<dbReference type="Reactome" id="R-BTA-9864848">
    <property type="pathway name" value="Complex IV assembly"/>
</dbReference>
<dbReference type="EvolutionaryTrace" id="P68530"/>
<dbReference type="Proteomes" id="UP000009136">
    <property type="component" value="Mitochondrion MT"/>
</dbReference>
<dbReference type="Bgee" id="ENSBTAG00000043556">
    <property type="expression patterns" value="Expressed in tongue muscle and 104 other cell types or tissues"/>
</dbReference>
<dbReference type="GO" id="GO:0005743">
    <property type="term" value="C:mitochondrial inner membrane"/>
    <property type="evidence" value="ECO:0007669"/>
    <property type="project" value="UniProtKB-SubCell"/>
</dbReference>
<dbReference type="GO" id="GO:0045277">
    <property type="term" value="C:respiratory chain complex IV"/>
    <property type="evidence" value="ECO:0000314"/>
    <property type="project" value="UniProtKB"/>
</dbReference>
<dbReference type="GO" id="GO:0005507">
    <property type="term" value="F:copper ion binding"/>
    <property type="evidence" value="ECO:0007669"/>
    <property type="project" value="InterPro"/>
</dbReference>
<dbReference type="GO" id="GO:0004129">
    <property type="term" value="F:cytochrome-c oxidase activity"/>
    <property type="evidence" value="ECO:0007669"/>
    <property type="project" value="UniProtKB-EC"/>
</dbReference>
<dbReference type="GO" id="GO:0042773">
    <property type="term" value="P:ATP synthesis coupled electron transport"/>
    <property type="evidence" value="ECO:0000318"/>
    <property type="project" value="GO_Central"/>
</dbReference>
<dbReference type="CDD" id="cd13912">
    <property type="entry name" value="CcO_II_C"/>
    <property type="match status" value="1"/>
</dbReference>
<dbReference type="FunFam" id="1.10.287.90:FF:000001">
    <property type="entry name" value="Cytochrome c oxidase subunit 2"/>
    <property type="match status" value="1"/>
</dbReference>
<dbReference type="FunFam" id="2.60.40.420:FF:000001">
    <property type="entry name" value="Cytochrome c oxidase subunit 2"/>
    <property type="match status" value="1"/>
</dbReference>
<dbReference type="Gene3D" id="1.10.287.90">
    <property type="match status" value="1"/>
</dbReference>
<dbReference type="Gene3D" id="2.60.40.420">
    <property type="entry name" value="Cupredoxins - blue copper proteins"/>
    <property type="match status" value="1"/>
</dbReference>
<dbReference type="InterPro" id="IPR045187">
    <property type="entry name" value="CcO_II"/>
</dbReference>
<dbReference type="InterPro" id="IPR002429">
    <property type="entry name" value="CcO_II-like_C"/>
</dbReference>
<dbReference type="InterPro" id="IPR034210">
    <property type="entry name" value="CcO_II_C"/>
</dbReference>
<dbReference type="InterPro" id="IPR001505">
    <property type="entry name" value="Copper_CuA"/>
</dbReference>
<dbReference type="InterPro" id="IPR008972">
    <property type="entry name" value="Cupredoxin"/>
</dbReference>
<dbReference type="InterPro" id="IPR014222">
    <property type="entry name" value="Cyt_c_oxidase_su2"/>
</dbReference>
<dbReference type="InterPro" id="IPR011759">
    <property type="entry name" value="Cyt_c_oxidase_su2_TM_dom"/>
</dbReference>
<dbReference type="InterPro" id="IPR036257">
    <property type="entry name" value="Cyt_c_oxidase_su2_TM_sf"/>
</dbReference>
<dbReference type="NCBIfam" id="TIGR02866">
    <property type="entry name" value="CoxB"/>
    <property type="match status" value="1"/>
</dbReference>
<dbReference type="PANTHER" id="PTHR22888:SF9">
    <property type="entry name" value="CYTOCHROME C OXIDASE SUBUNIT 2"/>
    <property type="match status" value="1"/>
</dbReference>
<dbReference type="PANTHER" id="PTHR22888">
    <property type="entry name" value="CYTOCHROME C OXIDASE, SUBUNIT II"/>
    <property type="match status" value="1"/>
</dbReference>
<dbReference type="Pfam" id="PF00116">
    <property type="entry name" value="COX2"/>
    <property type="match status" value="1"/>
</dbReference>
<dbReference type="Pfam" id="PF02790">
    <property type="entry name" value="COX2_TM"/>
    <property type="match status" value="1"/>
</dbReference>
<dbReference type="PRINTS" id="PR01166">
    <property type="entry name" value="CYCOXIDASEII"/>
</dbReference>
<dbReference type="SUPFAM" id="SSF49503">
    <property type="entry name" value="Cupredoxins"/>
    <property type="match status" value="1"/>
</dbReference>
<dbReference type="SUPFAM" id="SSF81464">
    <property type="entry name" value="Cytochrome c oxidase subunit II-like, transmembrane region"/>
    <property type="match status" value="1"/>
</dbReference>
<dbReference type="PROSITE" id="PS00078">
    <property type="entry name" value="COX2"/>
    <property type="match status" value="1"/>
</dbReference>
<dbReference type="PROSITE" id="PS50857">
    <property type="entry name" value="COX2_CUA"/>
    <property type="match status" value="1"/>
</dbReference>
<dbReference type="PROSITE" id="PS50999">
    <property type="entry name" value="COX2_TM"/>
    <property type="match status" value="1"/>
</dbReference>
<geneLocation type="mitochondrion"/>
<reference key="1">
    <citation type="journal article" date="1979" name="Hoppe-Seyler's Z. Physiol. Chem.">
        <title>Studies on cytochrome c oxidase, IV[1-3]. Primary structure and function of subunit II.</title>
        <authorList>
            <person name="Steffens G.J."/>
            <person name="Buse G."/>
        </authorList>
    </citation>
    <scope>PROTEIN SEQUENCE</scope>
    <scope>FORMYLATION AT MET-1</scope>
    <source>
        <strain evidence="12">Hereford</strain>
        <tissue>Heart</tissue>
    </source>
</reference>
<reference key="2">
    <citation type="journal article" date="1982" name="J. Mol. Biol.">
        <title>Complete sequence of bovine mitochondrial DNA. Conserved features of the mammalian mitochondrial genome.</title>
        <authorList>
            <person name="Anderson S."/>
            <person name="de Bruijn M.H.L."/>
            <person name="Coulson A.R."/>
            <person name="Eperon I.C."/>
            <person name="Sanger F."/>
            <person name="Young I.G."/>
        </authorList>
    </citation>
    <scope>NUCLEOTIDE SEQUENCE [GENOMIC DNA]</scope>
    <source>
        <tissue>Heart</tissue>
    </source>
</reference>
<reference key="3">
    <citation type="journal article" date="1980" name="Gene">
        <title>The genetic code in bovine mitochondria: sequence of genes for the cytochrome oxidase subunit II and two tRNAs.</title>
        <authorList>
            <person name="Young I.G."/>
            <person name="Anderson S."/>
        </authorList>
    </citation>
    <scope>NUCLEOTIDE SEQUENCE [GENOMIC DNA]</scope>
</reference>
<reference key="4">
    <citation type="submission" date="2002-03" db="EMBL/GenBank/DDBJ databases">
        <title>Bos taurus mitochondrial protein coding regions.</title>
        <authorList>
            <person name="Wettstein P.J."/>
        </authorList>
    </citation>
    <scope>NUCLEOTIDE SEQUENCE [GENOMIC DNA]</scope>
    <source>
        <strain>65</strain>
        <strain>66</strain>
        <strain>D</strain>
        <strain>F</strain>
    </source>
</reference>
<reference key="5">
    <citation type="journal article" date="2016" name="J. Biol. Chem.">
        <title>Purification of active respiratory supercomplex from bovine heart mitochondria enables functional studies.</title>
        <authorList>
            <person name="Shinzawa-Itoh K."/>
            <person name="Shimomura H."/>
            <person name="Yanagisawa S."/>
            <person name="Shimada S."/>
            <person name="Takahashi R."/>
            <person name="Oosaki M."/>
            <person name="Ogura T."/>
            <person name="Tsukihara T."/>
        </authorList>
    </citation>
    <scope>SUBUNIT</scope>
</reference>
<reference key="6">
    <citation type="journal article" date="1996" name="Science">
        <title>The whole structure of the 13-subunit oxidized cytochrome c oxidase at 2.8 A.</title>
        <authorList>
            <person name="Tsukihara T."/>
            <person name="Aoyama H."/>
            <person name="Yamashita E."/>
            <person name="Tomizaki T."/>
            <person name="Yamaguchi H."/>
            <person name="Shinzawa-Itoh K."/>
            <person name="Nakashima R."/>
            <person name="Yaono R."/>
            <person name="Yoshikawa S."/>
        </authorList>
    </citation>
    <scope>X-RAY CRYSTALLOGRAPHY (2.8 ANGSTROMS)</scope>
</reference>
<reference key="7">
    <citation type="journal article" date="1999" name="Acta Crystallogr. D">
        <title>Structure analysis of bovine heart cytochrome c oxidase at 2.8 A resolution.</title>
        <authorList>
            <person name="Tomizaki T."/>
            <person name="Yamashita E."/>
            <person name="Yamaguchi H."/>
            <person name="Aoyama H."/>
            <person name="Tsukihara T."/>
            <person name="Shinzawa-Itoh K."/>
            <person name="Nakashima R."/>
            <person name="Yaono R."/>
            <person name="Yoshikawa S."/>
        </authorList>
    </citation>
    <scope>X-RAY CRYSTALLOGRAPHY (2.8 ANGSTROMS)</scope>
    <source>
        <tissue>Heart</tissue>
    </source>
</reference>
<reference key="8">
    <citation type="journal article" date="2000" name="Acta Crystallogr. D">
        <title>X-ray structure of azide-bound fully oxidized cytochrome c oxidase from bovine heart at 2.9 A resolution.</title>
        <authorList>
            <person name="Fei M.J."/>
            <person name="Yamashita E."/>
            <person name="Inoue N."/>
            <person name="Yao M."/>
            <person name="Yamaguchi H."/>
            <person name="Tsukihara T."/>
            <person name="Shinzawa-Itoh K."/>
            <person name="Nakashima R."/>
            <person name="Yoshikawa S."/>
        </authorList>
    </citation>
    <scope>X-RAY CRYSTALLOGRAPHY (2.9 ANGSTROMS)</scope>
    <source>
        <tissue>Heart</tissue>
    </source>
</reference>
<reference key="9">
    <citation type="journal article" date="2010" name="Proc. Natl. Acad. Sci. U.S.A.">
        <title>Bovine cytochrome c oxidase structures enable O2 reduction with minimization of reactive oxygens and provide a proton-pumping gate.</title>
        <authorList>
            <person name="Muramoto K."/>
            <person name="Ohta K."/>
            <person name="Shinzawa-Itoh K."/>
            <person name="Kanda K."/>
            <person name="Taniguchi M."/>
            <person name="Nabekura H."/>
            <person name="Yamashita E."/>
            <person name="Tsukihara T."/>
            <person name="Yoshikawa S."/>
        </authorList>
    </citation>
    <scope>X-RAY CRYSTALLOGRAPHY (1.80 ANGSTROMS)</scope>
</reference>
<reference key="10">
    <citation type="journal article" date="2016" name="Elife">
        <title>Functional asymmetry and electron flow in the bovine respirasome.</title>
        <authorList>
            <person name="Sousa J.S."/>
            <person name="Mills D.J."/>
            <person name="Vonck J."/>
            <person name="Kuehlbrandt W."/>
        </authorList>
    </citation>
    <scope>STRUCTURE BY ELECTRON MICROSCOPY (9.10 ANGSTROMS)</scope>
</reference>
<reference key="11">
    <citation type="journal article" date="2016" name="J. Biol. Chem.">
        <title>The Mg2+-containing water cluster of mammalian cytochrome c oxidase collects four pumping proton equivalents in each catalytic cycle.</title>
        <authorList>
            <person name="Yano N."/>
            <person name="Muramoto K."/>
            <person name="Shimada A."/>
            <person name="Takemura S."/>
            <person name="Baba J."/>
            <person name="Fujisawa H."/>
            <person name="Mochizuki M."/>
            <person name="Shinzawa-Itoh K."/>
            <person name="Yamashita E."/>
            <person name="Tsukihara T."/>
            <person name="Yoshikawa S."/>
        </authorList>
    </citation>
    <scope>X-RAY CRYSTALLOGRAPHY (1.50 ANGSTROMS)</scope>
</reference>
<reference key="12">
    <citation type="journal article" date="2019" name="Proc. Natl. Acad. Sci. U.S.A.">
        <title>Monomeric structure of an active form of bovine cytochrome c oxidase.</title>
        <authorList>
            <person name="Shinzawa-Itoh K."/>
            <person name="Sugimura T."/>
            <person name="Misaki T."/>
            <person name="Tadehara Y."/>
            <person name="Yamamoto S."/>
            <person name="Hanada M."/>
            <person name="Yano N."/>
            <person name="Nakagawa T."/>
            <person name="Uene S."/>
            <person name="Yamada T."/>
            <person name="Aoyama H."/>
            <person name="Yamashita E."/>
            <person name="Tsukihara T."/>
            <person name="Yoshikawa S."/>
            <person name="Muramoto K."/>
        </authorList>
    </citation>
    <scope>X-RAY CRYSTALLOGRAPHY (1.85 ANGSTROMS)</scope>
</reference>
<feature type="chain" id="PRO_0000183517" description="Cytochrome c oxidase subunit 2">
    <location>
        <begin position="1"/>
        <end position="227"/>
    </location>
</feature>
<feature type="topological domain" description="Mitochondrial intermembrane" evidence="7">
    <location>
        <begin position="1"/>
        <end position="14"/>
    </location>
</feature>
<feature type="transmembrane region" description="Helical; Name=I" evidence="7">
    <location>
        <begin position="15"/>
        <end position="45"/>
    </location>
</feature>
<feature type="topological domain" description="Mitochondrial matrix" evidence="7">
    <location>
        <begin position="46"/>
        <end position="59"/>
    </location>
</feature>
<feature type="transmembrane region" description="Helical; Name=II" evidence="7">
    <location>
        <begin position="60"/>
        <end position="87"/>
    </location>
</feature>
<feature type="topological domain" description="Mitochondrial intermembrane" evidence="7">
    <location>
        <begin position="88"/>
        <end position="227"/>
    </location>
</feature>
<feature type="binding site" evidence="4 10">
    <location>
        <position position="161"/>
    </location>
    <ligand>
        <name>Cu cation</name>
        <dbReference type="ChEBI" id="CHEBI:23378"/>
        <label>A1</label>
    </ligand>
</feature>
<feature type="binding site" evidence="4 10">
    <location>
        <position position="196"/>
    </location>
    <ligand>
        <name>Cu cation</name>
        <dbReference type="ChEBI" id="CHEBI:23378"/>
        <label>A1</label>
    </ligand>
</feature>
<feature type="binding site" evidence="4 10">
    <location>
        <position position="196"/>
    </location>
    <ligand>
        <name>Cu cation</name>
        <dbReference type="ChEBI" id="CHEBI:23378"/>
        <label>A2</label>
    </ligand>
</feature>
<feature type="binding site" evidence="4 10">
    <location>
        <position position="198"/>
    </location>
    <ligand>
        <name>Cu cation</name>
        <dbReference type="ChEBI" id="CHEBI:23378"/>
        <label>A2</label>
    </ligand>
</feature>
<feature type="binding site" evidence="4 10">
    <location>
        <position position="198"/>
    </location>
    <ligand>
        <name>Mg(2+)</name>
        <dbReference type="ChEBI" id="CHEBI:18420"/>
        <note>ligand shared with MT-CO1</note>
    </ligand>
</feature>
<feature type="binding site" evidence="4 10">
    <location>
        <position position="200"/>
    </location>
    <ligand>
        <name>Cu cation</name>
        <dbReference type="ChEBI" id="CHEBI:23378"/>
        <label>A1</label>
    </ligand>
</feature>
<feature type="binding site" evidence="4 10">
    <location>
        <position position="200"/>
    </location>
    <ligand>
        <name>Cu cation</name>
        <dbReference type="ChEBI" id="CHEBI:23378"/>
        <label>A2</label>
    </ligand>
</feature>
<feature type="binding site" evidence="4 10">
    <location>
        <position position="204"/>
    </location>
    <ligand>
        <name>Cu cation</name>
        <dbReference type="ChEBI" id="CHEBI:23378"/>
        <label>A2</label>
    </ligand>
</feature>
<feature type="binding site" evidence="4 10">
    <location>
        <position position="207"/>
    </location>
    <ligand>
        <name>Cu cation</name>
        <dbReference type="ChEBI" id="CHEBI:23378"/>
        <label>A1</label>
    </ligand>
</feature>
<feature type="modified residue" description="N-formylmethionine" evidence="5">
    <location>
        <position position="1"/>
    </location>
</feature>
<feature type="modified residue" description="Phosphotyrosine" evidence="2">
    <location>
        <position position="218"/>
    </location>
</feature>
<feature type="sequence conflict" description="In Ref. 3; AAA31644." evidence="11" ref="3">
    <original>A</original>
    <variation>P</variation>
    <location>
        <position position="58"/>
    </location>
</feature>
<feature type="sequence conflict" description="In Ref. 3; AAA31644." evidence="11" ref="3">
    <original>F</original>
    <variation>L</variation>
    <location>
        <position position="118"/>
    </location>
</feature>
<feature type="helix" evidence="13">
    <location>
        <begin position="15"/>
        <end position="45"/>
    </location>
</feature>
<feature type="helix" evidence="13">
    <location>
        <begin position="59"/>
        <end position="88"/>
    </location>
</feature>
<feature type="strand" evidence="13">
    <location>
        <begin position="94"/>
        <end position="102"/>
    </location>
</feature>
<feature type="strand" evidence="13">
    <location>
        <begin position="105"/>
        <end position="110"/>
    </location>
</feature>
<feature type="strand" evidence="13">
    <location>
        <begin position="112"/>
        <end position="114"/>
    </location>
</feature>
<feature type="strand" evidence="13">
    <location>
        <begin position="116"/>
        <end position="120"/>
    </location>
</feature>
<feature type="helix" evidence="13">
    <location>
        <begin position="125"/>
        <end position="127"/>
    </location>
</feature>
<feature type="turn" evidence="13">
    <location>
        <begin position="134"/>
        <end position="136"/>
    </location>
</feature>
<feature type="strand" evidence="13">
    <location>
        <begin position="138"/>
        <end position="140"/>
    </location>
</feature>
<feature type="strand" evidence="13">
    <location>
        <begin position="142"/>
        <end position="145"/>
    </location>
</feature>
<feature type="strand" evidence="13">
    <location>
        <begin position="150"/>
        <end position="159"/>
    </location>
</feature>
<feature type="strand" evidence="13">
    <location>
        <begin position="161"/>
        <end position="165"/>
    </location>
</feature>
<feature type="helix" evidence="13">
    <location>
        <begin position="166"/>
        <end position="168"/>
    </location>
</feature>
<feature type="strand" evidence="13">
    <location>
        <begin position="170"/>
        <end position="174"/>
    </location>
</feature>
<feature type="strand" evidence="13">
    <location>
        <begin position="180"/>
        <end position="184"/>
    </location>
</feature>
<feature type="strand" evidence="13">
    <location>
        <begin position="190"/>
        <end position="194"/>
    </location>
</feature>
<feature type="helix" evidence="13">
    <location>
        <begin position="204"/>
        <end position="206"/>
    </location>
</feature>
<feature type="strand" evidence="13">
    <location>
        <begin position="209"/>
        <end position="214"/>
    </location>
</feature>
<feature type="helix" evidence="13">
    <location>
        <begin position="216"/>
        <end position="225"/>
    </location>
</feature>
<sequence length="227" mass="26021">MAYPMQLGFQDATSPIMEELLHFHDHTLMIVFLISSLVLYIISLMLTTKLTHTSTMDAQEVETIWTILPAIILILIALPSLRILYMMDEINNPSLTVKTMGHQWYWSYEYTDYEDLSFDSYMIPTSELKPGELRLLEVDNRVVLPMEMTIRMLVSSEDVLHSWAVPSLGLKTDAIPGRLNQTTLMSSRPGLYYGQCSEICGSNHSFMPIVLELVPLKYFEKWSASML</sequence>
<accession>P68530</accession>
<accession>P00404</accession>
<comment type="function">
    <text evidence="3">Component of the cytochrome c oxidase, the last enzyme in the mitochondrial electron transport chain which drives oxidative phosphorylation. The respiratory chain contains 3 multisubunit complexes succinate dehydrogenase (complex II, CII), ubiquinol-cytochrome c oxidoreductase (cytochrome b-c1 complex, complex III, CIII) and cytochrome c oxidase (complex IV, CIV), that cooperate to transfer electrons derived from NADH and succinate to molecular oxygen, creating an electrochemical gradient over the inner membrane that drives transmembrane transport and the ATP synthase. Cytochrome c oxidase is the component of the respiratory chain that catalyzes the reduction of oxygen to water. Electrons originating from reduced cytochrome c in the intermembrane space (IMS) are transferred via the dinuclear copper A center (CU(A)) of subunit 2 and heme A of subunit 1 to the active site in subunit 1, a binuclear center (BNC) formed by heme A3 and copper B (CU(B)). The BNC reduces molecular oxygen to 2 water molecules using 4 electrons from cytochrome c in the IMS and 4 protons from the mitochondrial matrix.</text>
</comment>
<comment type="catalytic activity">
    <reaction evidence="3">
        <text>4 Fe(II)-[cytochrome c] + O2 + 8 H(+)(in) = 4 Fe(III)-[cytochrome c] + 2 H2O + 4 H(+)(out)</text>
        <dbReference type="Rhea" id="RHEA:11436"/>
        <dbReference type="Rhea" id="RHEA-COMP:10350"/>
        <dbReference type="Rhea" id="RHEA-COMP:14399"/>
        <dbReference type="ChEBI" id="CHEBI:15377"/>
        <dbReference type="ChEBI" id="CHEBI:15378"/>
        <dbReference type="ChEBI" id="CHEBI:15379"/>
        <dbReference type="ChEBI" id="CHEBI:29033"/>
        <dbReference type="ChEBI" id="CHEBI:29034"/>
        <dbReference type="EC" id="7.1.1.9"/>
    </reaction>
    <physiologicalReaction direction="left-to-right" evidence="3">
        <dbReference type="Rhea" id="RHEA:11437"/>
    </physiologicalReaction>
</comment>
<comment type="cofactor">
    <cofactor evidence="4 10">
        <name>Cu cation</name>
        <dbReference type="ChEBI" id="CHEBI:23378"/>
    </cofactor>
    <text evidence="4 10">Binds a dinuclear copper A center per subunit.</text>
</comment>
<comment type="subunit">
    <text evidence="1 6 8 10">Component of the cytochrome c oxidase (complex IV, CIV), a multisubunit enzyme composed of 14 subunits. The complex is composed of a catalytic core of 3 subunits MT-CO1, MT-CO2 and MT-CO3, encoded in the mitochondrial DNA, and 11 supernumerary subunits COX4I1 (or COX4I2), COX5A, COX5B, COX6A2 (or COX6A1), COX6B1 (or COX6B2), COX6C, COX7A1 (or COX7A2), COX7B, COX7C, COX8B and NDUFA4, which are encoded in the nuclear genome (PubMed:8638158). The complex exists as a monomer or a dimer and forms supercomplexes (SCs) in the inner mitochondrial membrane with NADH-ubiquinone oxidoreductase (complex I, CI) and ubiquinol-cytochrome c oxidoreductase (cytochrome b-c1 complex, complex III, CIII), resulting in different assemblies (supercomplex SCI(1)III(2)IV(1) and megacomplex MCI(2)III(2)IV(2)) (PubMed:26698328, PubMed:27830641). Found in a complex with TMEM177, COA6, COX18, COX20, SCO1 and SCO2. Interacts with TMEM177 in a COX20-dependent manner. Interacts with COX20. Interacts with COX16 (By similarity).</text>
</comment>
<comment type="subcellular location">
    <subcellularLocation>
        <location evidence="7 9">Mitochondrion inner membrane</location>
        <topology evidence="7 9">Multi-pass membrane protein</topology>
    </subcellularLocation>
</comment>
<comment type="similarity">
    <text evidence="11">Belongs to the cytochrome c oxidase subunit 2 family.</text>
</comment>